<organism>
    <name type="scientific">Arabidopsis thaliana</name>
    <name type="common">Mouse-ear cress</name>
    <dbReference type="NCBI Taxonomy" id="3702"/>
    <lineage>
        <taxon>Eukaryota</taxon>
        <taxon>Viridiplantae</taxon>
        <taxon>Streptophyta</taxon>
        <taxon>Embryophyta</taxon>
        <taxon>Tracheophyta</taxon>
        <taxon>Spermatophyta</taxon>
        <taxon>Magnoliopsida</taxon>
        <taxon>eudicotyledons</taxon>
        <taxon>Gunneridae</taxon>
        <taxon>Pentapetalae</taxon>
        <taxon>rosids</taxon>
        <taxon>malvids</taxon>
        <taxon>Brassicales</taxon>
        <taxon>Brassicaceae</taxon>
        <taxon>Camelineae</taxon>
        <taxon>Arabidopsis</taxon>
    </lineage>
</organism>
<protein>
    <recommendedName>
        <fullName>Inactive protein RESTRICTED TEV MOVEMENT 1</fullName>
    </recommendedName>
    <alternativeName>
        <fullName>Inactive restricted tobacco etch virus movement protein 1</fullName>
    </alternativeName>
</protein>
<sequence length="174" mass="19232">MKIGPVGKHDARSTTIVNWDEGSHDGFIYQIFLSHGVAGIMSIQFQFVMDGKLVLSDRHGPCSGDMFDVIELNYPHEYITGISGEYYKYEANIPHMRSLKFNTNTSEYGPFGTSGSSNDKFAFKLGKSPQFGGFHGTYDASGLQYIGVYLRPKTVLPKIDTGNAEETESKIVLG</sequence>
<dbReference type="EMBL" id="FR681970">
    <property type="protein sequence ID" value="CBW45827.1"/>
    <property type="molecule type" value="Genomic_DNA"/>
</dbReference>
<dbReference type="EMBL" id="FR681979">
    <property type="protein sequence ID" value="CBW45836.1"/>
    <property type="molecule type" value="Genomic_DNA"/>
</dbReference>
<dbReference type="EMBL" id="FR681994">
    <property type="protein sequence ID" value="CBW45851.1"/>
    <property type="molecule type" value="Genomic_DNA"/>
</dbReference>
<dbReference type="SMR" id="D9UBG0"/>
<dbReference type="OrthoDB" id="581739at2759"/>
<dbReference type="ExpressionAtlas" id="D9UBG0">
    <property type="expression patterns" value="baseline and differential"/>
</dbReference>
<dbReference type="GO" id="GO:0005737">
    <property type="term" value="C:cytoplasm"/>
    <property type="evidence" value="ECO:0007669"/>
    <property type="project" value="UniProtKB-SubCell"/>
</dbReference>
<dbReference type="GO" id="GO:0030246">
    <property type="term" value="F:carbohydrate binding"/>
    <property type="evidence" value="ECO:0007669"/>
    <property type="project" value="UniProtKB-KW"/>
</dbReference>
<dbReference type="GO" id="GO:0006952">
    <property type="term" value="P:defense response"/>
    <property type="evidence" value="ECO:0007669"/>
    <property type="project" value="UniProtKB-KW"/>
</dbReference>
<dbReference type="CDD" id="cd09612">
    <property type="entry name" value="Jacalin"/>
    <property type="match status" value="1"/>
</dbReference>
<dbReference type="Gene3D" id="2.100.10.30">
    <property type="entry name" value="Jacalin-like lectin domain"/>
    <property type="match status" value="1"/>
</dbReference>
<dbReference type="InterPro" id="IPR001229">
    <property type="entry name" value="Jacalin-like_lectin_dom"/>
</dbReference>
<dbReference type="InterPro" id="IPR033734">
    <property type="entry name" value="Jacalin-like_lectin_dom_plant"/>
</dbReference>
<dbReference type="InterPro" id="IPR036404">
    <property type="entry name" value="Jacalin-like_lectin_dom_sf"/>
</dbReference>
<dbReference type="PANTHER" id="PTHR47293:SF80">
    <property type="entry name" value="JACALIN-RELATED LECTIN 2-RELATED"/>
    <property type="match status" value="1"/>
</dbReference>
<dbReference type="PANTHER" id="PTHR47293">
    <property type="entry name" value="JACALIN-RELATED LECTIN 3"/>
    <property type="match status" value="1"/>
</dbReference>
<dbReference type="Pfam" id="PF01419">
    <property type="entry name" value="Jacalin"/>
    <property type="match status" value="1"/>
</dbReference>
<dbReference type="SMART" id="SM00915">
    <property type="entry name" value="Jacalin"/>
    <property type="match status" value="1"/>
</dbReference>
<dbReference type="SUPFAM" id="SSF51101">
    <property type="entry name" value="Mannose-binding lectins"/>
    <property type="match status" value="1"/>
</dbReference>
<dbReference type="PROSITE" id="PS51752">
    <property type="entry name" value="JACALIN_LECTIN"/>
    <property type="match status" value="1"/>
</dbReference>
<feature type="chain" id="PRO_0000429164" description="Inactive protein RESTRICTED TEV MOVEMENT 1">
    <location>
        <begin position="1"/>
        <end position="174"/>
    </location>
</feature>
<feature type="domain" description="Jacalin-type lectin" evidence="2">
    <location>
        <begin position="1"/>
        <end position="152"/>
    </location>
</feature>
<proteinExistence type="inferred from homology"/>
<evidence type="ECO:0000250" key="1"/>
<evidence type="ECO:0000255" key="2">
    <source>
        <dbReference type="PROSITE-ProRule" id="PRU01088"/>
    </source>
</evidence>
<evidence type="ECO:0000269" key="3">
    <source>
    </source>
</evidence>
<evidence type="ECO:0000305" key="4"/>
<keyword id="KW-0963">Cytoplasm</keyword>
<keyword id="KW-0430">Lectin</keyword>
<keyword id="KW-0611">Plant defense</keyword>
<accession>D9UBG0</accession>
<comment type="function">
    <text evidence="3">Unable to mediate restriction of long-distance movement of the pathogenic tobacco etch virus (TEV) without causing a hypersensitive response or inducing systemic acquired resistance.</text>
</comment>
<comment type="subunit">
    <text evidence="1">Self-interacts. Interacts with RTM3 (By similarity).</text>
</comment>
<comment type="subcellular location">
    <subcellularLocation>
        <location evidence="1">Cytoplasm</location>
    </subcellularLocation>
    <text evidence="1">Soluble protein present in sieve elements in a punctate pattern of 1 to 2 um spheres.</text>
</comment>
<comment type="similarity">
    <text evidence="2 4">Belongs to the jacalin lectin family.</text>
</comment>
<comment type="caution">
    <text evidence="4">Has been shown to be active in cv. Columbia (AC Q9SE37) due to naturally occurring sequence variation in this strain. The sequence shown is from strains cv. Bl-1, cv. C24 and cv. Ct-1.</text>
</comment>
<gene>
    <name type="primary">RTM1</name>
</gene>
<name>RTM1B_ARATH</name>
<reference key="1">
    <citation type="journal article" date="2012" name="PLoS ONE">
        <title>The RTM resistance to potyviruses in Arabidopsis thaliana: natural variation of the RTM genes and evidence for the implication of additional genes.</title>
        <authorList>
            <person name="Cosson P."/>
            <person name="Schurdi-Levraud V."/>
            <person name="Le Q.H."/>
            <person name="Sicard O."/>
            <person name="Caballero M."/>
            <person name="Roux F."/>
            <person name="Le Gall O."/>
            <person name="Candresse T."/>
            <person name="Revers F."/>
        </authorList>
    </citation>
    <scope>NUCLEOTIDE SEQUENCE [GENOMIC DNA]</scope>
    <scope>FUNCTION</scope>
    <source>
        <strain>cv. Bl-1</strain>
        <strain>cv. C24</strain>
        <strain>cv. Ct-1</strain>
        <tissue>Leaf</tissue>
    </source>
</reference>